<keyword id="KW-0963">Cytoplasm</keyword>
<keyword id="KW-1185">Reference proteome</keyword>
<keyword id="KW-0687">Ribonucleoprotein</keyword>
<keyword id="KW-0689">Ribosomal protein</keyword>
<gene>
    <name type="primary">RPS17</name>
</gene>
<evidence type="ECO:0000250" key="1">
    <source>
        <dbReference type="UniProtKB" id="P08708"/>
    </source>
</evidence>
<evidence type="ECO:0000305" key="2"/>
<dbReference type="EMBL" id="AY232491">
    <property type="protein sequence ID" value="AAO46161.1"/>
    <property type="molecule type" value="mRNA"/>
</dbReference>
<dbReference type="RefSeq" id="XP_015728195.1">
    <property type="nucleotide sequence ID" value="XM_015872709.2"/>
</dbReference>
<dbReference type="SMR" id="Q7ZUB2"/>
<dbReference type="GeneID" id="107318631"/>
<dbReference type="KEGG" id="cjo:107318631"/>
<dbReference type="CTD" id="6218"/>
<dbReference type="OrthoDB" id="1727351at2759"/>
<dbReference type="Proteomes" id="UP000694412">
    <property type="component" value="Unplaced"/>
</dbReference>
<dbReference type="GO" id="GO:0022626">
    <property type="term" value="C:cytosolic ribosome"/>
    <property type="evidence" value="ECO:0007669"/>
    <property type="project" value="UniProtKB-ARBA"/>
</dbReference>
<dbReference type="GO" id="GO:1990904">
    <property type="term" value="C:ribonucleoprotein complex"/>
    <property type="evidence" value="ECO:0007669"/>
    <property type="project" value="UniProtKB-KW"/>
</dbReference>
<dbReference type="GO" id="GO:0003735">
    <property type="term" value="F:structural constituent of ribosome"/>
    <property type="evidence" value="ECO:0007669"/>
    <property type="project" value="InterPro"/>
</dbReference>
<dbReference type="GO" id="GO:0006412">
    <property type="term" value="P:translation"/>
    <property type="evidence" value="ECO:0007669"/>
    <property type="project" value="InterPro"/>
</dbReference>
<dbReference type="FunFam" id="1.10.60.20:FF:000001">
    <property type="entry name" value="40S ribosomal protein S17"/>
    <property type="match status" value="1"/>
</dbReference>
<dbReference type="Gene3D" id="1.10.60.20">
    <property type="entry name" value="Ribosomal protein S17e-like"/>
    <property type="match status" value="1"/>
</dbReference>
<dbReference type="HAMAP" id="MF_00511">
    <property type="entry name" value="Ribosomal_eS17"/>
    <property type="match status" value="1"/>
</dbReference>
<dbReference type="InterPro" id="IPR001210">
    <property type="entry name" value="Ribosomal_eS17"/>
</dbReference>
<dbReference type="InterPro" id="IPR018273">
    <property type="entry name" value="Ribosomal_eS17_CS"/>
</dbReference>
<dbReference type="InterPro" id="IPR036401">
    <property type="entry name" value="Ribosomal_eS17_sf"/>
</dbReference>
<dbReference type="NCBIfam" id="NF002242">
    <property type="entry name" value="PRK01151.1"/>
    <property type="match status" value="1"/>
</dbReference>
<dbReference type="PANTHER" id="PTHR10732">
    <property type="entry name" value="40S RIBOSOMAL PROTEIN S17"/>
    <property type="match status" value="1"/>
</dbReference>
<dbReference type="PANTHER" id="PTHR10732:SF0">
    <property type="entry name" value="40S RIBOSOMAL PROTEIN S17"/>
    <property type="match status" value="1"/>
</dbReference>
<dbReference type="Pfam" id="PF00833">
    <property type="entry name" value="Ribosomal_S17e"/>
    <property type="match status" value="1"/>
</dbReference>
<dbReference type="SUPFAM" id="SSF116820">
    <property type="entry name" value="Rps17e-like"/>
    <property type="match status" value="1"/>
</dbReference>
<dbReference type="PROSITE" id="PS00712">
    <property type="entry name" value="RIBOSOMAL_S17E"/>
    <property type="match status" value="1"/>
</dbReference>
<reference key="1">
    <citation type="submission" date="2003-02" db="EMBL/GenBank/DDBJ databases">
        <title>cDNA cloning of Japanese quail ribosomal protein S17.</title>
        <authorList>
            <person name="Tsukada A."/>
            <person name="Saito N."/>
            <person name="Shimada K."/>
        </authorList>
    </citation>
    <scope>NUCLEOTIDE SEQUENCE [MRNA]</scope>
    <source>
        <tissue>Adrenal gland</tissue>
    </source>
</reference>
<proteinExistence type="evidence at transcript level"/>
<feature type="chain" id="PRO_0000141530" description="Small ribosomal subunit protein eS17">
    <location>
        <begin position="1"/>
        <end position="135"/>
    </location>
</feature>
<name>RS17_COTJA</name>
<sequence length="135" mass="15538">MGRVRTKTVKKAARVIIEKYYTRLGNDFHTNKRVCEEIAIIPSKKLRNKIAGYVTHLMKRIQRGPVRGISIKLQEEERERRDNYVPEVSALDQEIIEVDPDTKEMLKLLDFGSLSNLQVTQPTVGMNFKTPRGAL</sequence>
<protein>
    <recommendedName>
        <fullName evidence="2">Small ribosomal subunit protein eS17</fullName>
    </recommendedName>
    <alternativeName>
        <fullName>40S ribosomal protein S17</fullName>
    </alternativeName>
</protein>
<comment type="function">
    <text evidence="1">Component of the small ribosomal subunit. The ribosome is a large ribonucleoprotein complex responsible for the synthesis of proteins in the cell.</text>
</comment>
<comment type="subunit">
    <text evidence="1">Component of the small ribosomal subunit.</text>
</comment>
<comment type="subcellular location">
    <subcellularLocation>
        <location evidence="1">Cytoplasm</location>
    </subcellularLocation>
</comment>
<comment type="similarity">
    <text evidence="2">Belongs to the eukaryotic ribosomal protein eS17 family.</text>
</comment>
<organism>
    <name type="scientific">Coturnix japonica</name>
    <name type="common">Japanese quail</name>
    <name type="synonym">Coturnix coturnix japonica</name>
    <dbReference type="NCBI Taxonomy" id="93934"/>
    <lineage>
        <taxon>Eukaryota</taxon>
        <taxon>Metazoa</taxon>
        <taxon>Chordata</taxon>
        <taxon>Craniata</taxon>
        <taxon>Vertebrata</taxon>
        <taxon>Euteleostomi</taxon>
        <taxon>Archelosauria</taxon>
        <taxon>Archosauria</taxon>
        <taxon>Dinosauria</taxon>
        <taxon>Saurischia</taxon>
        <taxon>Theropoda</taxon>
        <taxon>Coelurosauria</taxon>
        <taxon>Aves</taxon>
        <taxon>Neognathae</taxon>
        <taxon>Galloanserae</taxon>
        <taxon>Galliformes</taxon>
        <taxon>Phasianidae</taxon>
        <taxon>Perdicinae</taxon>
        <taxon>Coturnix</taxon>
    </lineage>
</organism>
<accession>Q7ZUB2</accession>